<protein>
    <recommendedName>
        <fullName evidence="1">UPF0060 membrane protein Francci3_2786</fullName>
    </recommendedName>
</protein>
<sequence length="110" mass="11660">MGVVRSLLLFVVAAVTEIGGAWLVWQGVREHRGPVWVGLGIGFLAAYGFVATLQPDAHFGRILAAYGGVFVAGSLLWGVAVDGFRPDRYDLAGAAICLLGVAVIMYARRV</sequence>
<name>Y2786_FRACC</name>
<accession>Q2J997</accession>
<keyword id="KW-1003">Cell membrane</keyword>
<keyword id="KW-0472">Membrane</keyword>
<keyword id="KW-1185">Reference proteome</keyword>
<keyword id="KW-0812">Transmembrane</keyword>
<keyword id="KW-1133">Transmembrane helix</keyword>
<feature type="chain" id="PRO_0000282225" description="UPF0060 membrane protein Francci3_2786">
    <location>
        <begin position="1"/>
        <end position="110"/>
    </location>
</feature>
<feature type="transmembrane region" description="Helical" evidence="1">
    <location>
        <begin position="8"/>
        <end position="28"/>
    </location>
</feature>
<feature type="transmembrane region" description="Helical" evidence="1">
    <location>
        <begin position="33"/>
        <end position="53"/>
    </location>
</feature>
<feature type="transmembrane region" description="Helical" evidence="1">
    <location>
        <begin position="62"/>
        <end position="82"/>
    </location>
</feature>
<feature type="transmembrane region" description="Helical" evidence="1">
    <location>
        <begin position="87"/>
        <end position="107"/>
    </location>
</feature>
<comment type="subcellular location">
    <subcellularLocation>
        <location evidence="1">Cell membrane</location>
        <topology evidence="1">Multi-pass membrane protein</topology>
    </subcellularLocation>
</comment>
<comment type="similarity">
    <text evidence="1">Belongs to the UPF0060 family.</text>
</comment>
<comment type="sequence caution" evidence="2">
    <conflict type="erroneous initiation">
        <sequence resource="EMBL-CDS" id="ABD12145"/>
    </conflict>
</comment>
<gene>
    <name type="ordered locus">Francci3_2786</name>
</gene>
<evidence type="ECO:0000255" key="1">
    <source>
        <dbReference type="HAMAP-Rule" id="MF_00010"/>
    </source>
</evidence>
<evidence type="ECO:0000305" key="2"/>
<organism>
    <name type="scientific">Frankia casuarinae (strain DSM 45818 / CECT 9043 / HFP020203 / CcI3)</name>
    <dbReference type="NCBI Taxonomy" id="106370"/>
    <lineage>
        <taxon>Bacteria</taxon>
        <taxon>Bacillati</taxon>
        <taxon>Actinomycetota</taxon>
        <taxon>Actinomycetes</taxon>
        <taxon>Frankiales</taxon>
        <taxon>Frankiaceae</taxon>
        <taxon>Frankia</taxon>
    </lineage>
</organism>
<proteinExistence type="inferred from homology"/>
<reference key="1">
    <citation type="journal article" date="2007" name="Genome Res.">
        <title>Genome characteristics of facultatively symbiotic Frankia sp. strains reflect host range and host plant biogeography.</title>
        <authorList>
            <person name="Normand P."/>
            <person name="Lapierre P."/>
            <person name="Tisa L.S."/>
            <person name="Gogarten J.P."/>
            <person name="Alloisio N."/>
            <person name="Bagnarol E."/>
            <person name="Bassi C.A."/>
            <person name="Berry A.M."/>
            <person name="Bickhart D.M."/>
            <person name="Choisne N."/>
            <person name="Couloux A."/>
            <person name="Cournoyer B."/>
            <person name="Cruveiller S."/>
            <person name="Daubin V."/>
            <person name="Demange N."/>
            <person name="Francino M.P."/>
            <person name="Goltsman E."/>
            <person name="Huang Y."/>
            <person name="Kopp O.R."/>
            <person name="Labarre L."/>
            <person name="Lapidus A."/>
            <person name="Lavire C."/>
            <person name="Marechal J."/>
            <person name="Martinez M."/>
            <person name="Mastronunzio J.E."/>
            <person name="Mullin B.C."/>
            <person name="Niemann J."/>
            <person name="Pujic P."/>
            <person name="Rawnsley T."/>
            <person name="Rouy Z."/>
            <person name="Schenowitz C."/>
            <person name="Sellstedt A."/>
            <person name="Tavares F."/>
            <person name="Tomkins J.P."/>
            <person name="Vallenet D."/>
            <person name="Valverde C."/>
            <person name="Wall L.G."/>
            <person name="Wang Y."/>
            <person name="Medigue C."/>
            <person name="Benson D.R."/>
        </authorList>
    </citation>
    <scope>NUCLEOTIDE SEQUENCE [LARGE SCALE GENOMIC DNA]</scope>
    <source>
        <strain>DSM 45818 / CECT 9043 / HFP020203 / CcI3</strain>
    </source>
</reference>
<dbReference type="EMBL" id="CP000249">
    <property type="protein sequence ID" value="ABD12145.1"/>
    <property type="status" value="ALT_INIT"/>
    <property type="molecule type" value="Genomic_DNA"/>
</dbReference>
<dbReference type="RefSeq" id="WP_035910726.1">
    <property type="nucleotide sequence ID" value="NZ_LRTJ01000014.1"/>
</dbReference>
<dbReference type="SMR" id="Q2J997"/>
<dbReference type="KEGG" id="fra:Francci3_2786"/>
<dbReference type="eggNOG" id="COG1742">
    <property type="taxonomic scope" value="Bacteria"/>
</dbReference>
<dbReference type="HOGENOM" id="CLU_117653_0_1_11"/>
<dbReference type="OrthoDB" id="123240at2"/>
<dbReference type="PhylomeDB" id="Q2J997"/>
<dbReference type="Proteomes" id="UP000001937">
    <property type="component" value="Chromosome"/>
</dbReference>
<dbReference type="GO" id="GO:0005886">
    <property type="term" value="C:plasma membrane"/>
    <property type="evidence" value="ECO:0007669"/>
    <property type="project" value="UniProtKB-SubCell"/>
</dbReference>
<dbReference type="HAMAP" id="MF_00010">
    <property type="entry name" value="UPF0060"/>
    <property type="match status" value="1"/>
</dbReference>
<dbReference type="InterPro" id="IPR003844">
    <property type="entry name" value="UPF0060"/>
</dbReference>
<dbReference type="NCBIfam" id="NF002586">
    <property type="entry name" value="PRK02237.1"/>
    <property type="match status" value="1"/>
</dbReference>
<dbReference type="PANTHER" id="PTHR36116">
    <property type="entry name" value="UPF0060 MEMBRANE PROTEIN YNFA"/>
    <property type="match status" value="1"/>
</dbReference>
<dbReference type="PANTHER" id="PTHR36116:SF1">
    <property type="entry name" value="UPF0060 MEMBRANE PROTEIN YNFA"/>
    <property type="match status" value="1"/>
</dbReference>
<dbReference type="Pfam" id="PF02694">
    <property type="entry name" value="UPF0060"/>
    <property type="match status" value="1"/>
</dbReference>
<dbReference type="SUPFAM" id="SSF103481">
    <property type="entry name" value="Multidrug resistance efflux transporter EmrE"/>
    <property type="match status" value="1"/>
</dbReference>